<sequence>METTQTSTIASKDSRSAWRKTDTMWMLGLYGTAIGAGVLFLPINAGVGGMIPLIIMAILAFPMTFFAHRGLTRFVLSGKNPGEDITEVVEEHFGIGAGKLITLLYFFAIYPILLVYSVAITNTVESFMSHQLGMTPPPRAILSLILIVGMMTIVRFGEQMIVKAMSILVFPFVGVLMLLALYLIPQWNGAALETLSLDTASATGNGLWMTLWLAIPVMVFSFNHSPIISSFAVAKREEYGDMAEQKCSKILAFAHIMMVLTVMFFVFSCVLSLTPADLAAAKEQNISILSYLANHFNAPVIAWMAPIIAIIAITKSFLGHYLGAREGFNGMVIKSLRGKGKSIEINKLNRITALFMLVTTWIVATLNPSILGMIETLGGPIIAMILFLMPMYAIQKVPAMRKYSGHISNVFVVVMGLIAISAIFYSLFS</sequence>
<protein>
    <recommendedName>
        <fullName evidence="1">Serine transporter SdaC</fullName>
    </recommendedName>
    <alternativeName>
        <fullName evidence="1">H(+)/L-serine symporter</fullName>
    </alternativeName>
</protein>
<feature type="chain" id="PRO_0000093809" description="Serine transporter SdaC">
    <location>
        <begin position="1"/>
        <end position="429"/>
    </location>
</feature>
<feature type="topological domain" description="Cytoplasmic" evidence="2">
    <location>
        <begin position="1"/>
        <end position="22"/>
    </location>
</feature>
<feature type="transmembrane region" description="Helical" evidence="2">
    <location>
        <begin position="23"/>
        <end position="43"/>
    </location>
</feature>
<feature type="topological domain" description="Periplasmic" evidence="2">
    <location>
        <begin position="44"/>
        <end position="46"/>
    </location>
</feature>
<feature type="transmembrane region" description="Helical" evidence="2">
    <location>
        <begin position="47"/>
        <end position="67"/>
    </location>
</feature>
<feature type="topological domain" description="Cytoplasmic" evidence="2">
    <location>
        <begin position="68"/>
        <end position="99"/>
    </location>
</feature>
<feature type="transmembrane region" description="Helical" evidence="2">
    <location>
        <begin position="100"/>
        <end position="120"/>
    </location>
</feature>
<feature type="topological domain" description="Periplasmic" evidence="2">
    <location>
        <begin position="121"/>
        <end position="140"/>
    </location>
</feature>
<feature type="transmembrane region" description="Helical" evidence="2">
    <location>
        <begin position="141"/>
        <end position="161"/>
    </location>
</feature>
<feature type="topological domain" description="Cytoplasmic" evidence="2">
    <location>
        <begin position="162"/>
        <end position="163"/>
    </location>
</feature>
<feature type="transmembrane region" description="Helical" evidence="2">
    <location>
        <begin position="164"/>
        <end position="184"/>
    </location>
</feature>
<feature type="topological domain" description="Periplasmic" evidence="2">
    <location>
        <begin position="185"/>
        <end position="201"/>
    </location>
</feature>
<feature type="transmembrane region" description="Helical" evidence="2">
    <location>
        <begin position="202"/>
        <end position="222"/>
    </location>
</feature>
<feature type="topological domain" description="Cytoplasmic" evidence="2">
    <location>
        <begin position="223"/>
        <end position="249"/>
    </location>
</feature>
<feature type="transmembrane region" description="Helical" evidence="2">
    <location>
        <begin position="250"/>
        <end position="270"/>
    </location>
</feature>
<feature type="topological domain" description="Periplasmic" evidence="2">
    <location>
        <begin position="271"/>
        <end position="297"/>
    </location>
</feature>
<feature type="transmembrane region" description="Helical" evidence="2">
    <location>
        <begin position="298"/>
        <end position="318"/>
    </location>
</feature>
<feature type="topological domain" description="Cytoplasmic" evidence="2">
    <location>
        <begin position="319"/>
        <end position="347"/>
    </location>
</feature>
<feature type="transmembrane region" description="Helical" evidence="2">
    <location>
        <begin position="348"/>
        <end position="368"/>
    </location>
</feature>
<feature type="topological domain" description="Periplasmic" evidence="2">
    <location>
        <position position="369"/>
    </location>
</feature>
<feature type="transmembrane region" description="Helical" evidence="2">
    <location>
        <begin position="370"/>
        <end position="390"/>
    </location>
</feature>
<feature type="topological domain" description="Cytoplasmic" evidence="2">
    <location>
        <begin position="391"/>
        <end position="406"/>
    </location>
</feature>
<feature type="transmembrane region" description="Helical" evidence="2">
    <location>
        <begin position="407"/>
        <end position="427"/>
    </location>
</feature>
<feature type="topological domain" description="Periplasmic" evidence="2">
    <location>
        <begin position="428"/>
        <end position="429"/>
    </location>
</feature>
<proteinExistence type="inferred from homology"/>
<reference key="1">
    <citation type="journal article" date="2001" name="Nature">
        <title>Genome sequence of enterohaemorrhagic Escherichia coli O157:H7.</title>
        <authorList>
            <person name="Perna N.T."/>
            <person name="Plunkett G. III"/>
            <person name="Burland V."/>
            <person name="Mau B."/>
            <person name="Glasner J.D."/>
            <person name="Rose D.J."/>
            <person name="Mayhew G.F."/>
            <person name="Evans P.S."/>
            <person name="Gregor J."/>
            <person name="Kirkpatrick H.A."/>
            <person name="Posfai G."/>
            <person name="Hackett J."/>
            <person name="Klink S."/>
            <person name="Boutin A."/>
            <person name="Shao Y."/>
            <person name="Miller L."/>
            <person name="Grotbeck E.J."/>
            <person name="Davis N.W."/>
            <person name="Lim A."/>
            <person name="Dimalanta E.T."/>
            <person name="Potamousis K."/>
            <person name="Apodaca J."/>
            <person name="Anantharaman T.S."/>
            <person name="Lin J."/>
            <person name="Yen G."/>
            <person name="Schwartz D.C."/>
            <person name="Welch R.A."/>
            <person name="Blattner F.R."/>
        </authorList>
    </citation>
    <scope>NUCLEOTIDE SEQUENCE [LARGE SCALE GENOMIC DNA]</scope>
    <source>
        <strain>O157:H7 / EDL933 / ATCC 700927 / EHEC</strain>
    </source>
</reference>
<reference key="2">
    <citation type="journal article" date="2001" name="DNA Res.">
        <title>Complete genome sequence of enterohemorrhagic Escherichia coli O157:H7 and genomic comparison with a laboratory strain K-12.</title>
        <authorList>
            <person name="Hayashi T."/>
            <person name="Makino K."/>
            <person name="Ohnishi M."/>
            <person name="Kurokawa K."/>
            <person name="Ishii K."/>
            <person name="Yokoyama K."/>
            <person name="Han C.-G."/>
            <person name="Ohtsubo E."/>
            <person name="Nakayama K."/>
            <person name="Murata T."/>
            <person name="Tanaka M."/>
            <person name="Tobe T."/>
            <person name="Iida T."/>
            <person name="Takami H."/>
            <person name="Honda T."/>
            <person name="Sasakawa C."/>
            <person name="Ogasawara N."/>
            <person name="Yasunaga T."/>
            <person name="Kuhara S."/>
            <person name="Shiba T."/>
            <person name="Hattori M."/>
            <person name="Shinagawa H."/>
        </authorList>
    </citation>
    <scope>NUCLEOTIDE SEQUENCE [LARGE SCALE GENOMIC DNA]</scope>
    <source>
        <strain>O157:H7 / Sakai / RIMD 0509952 / EHEC</strain>
    </source>
</reference>
<accession>P0AAD7</accession>
<accession>P36559</accession>
<gene>
    <name type="primary">sdaC</name>
    <name type="ordered locus">Z4113</name>
    <name type="ordered locus">ECs3656</name>
</gene>
<organism>
    <name type="scientific">Escherichia coli O157:H7</name>
    <dbReference type="NCBI Taxonomy" id="83334"/>
    <lineage>
        <taxon>Bacteria</taxon>
        <taxon>Pseudomonadati</taxon>
        <taxon>Pseudomonadota</taxon>
        <taxon>Gammaproteobacteria</taxon>
        <taxon>Enterobacterales</taxon>
        <taxon>Enterobacteriaceae</taxon>
        <taxon>Escherichia</taxon>
    </lineage>
</organism>
<evidence type="ECO:0000250" key="1">
    <source>
        <dbReference type="UniProtKB" id="P0AAD6"/>
    </source>
</evidence>
<evidence type="ECO:0000255" key="2"/>
<evidence type="ECO:0000305" key="3"/>
<name>SDAC_ECO57</name>
<comment type="function">
    <text evidence="1">Mediates the import of L-serine into the cell. Is energized by proton cotransport.</text>
</comment>
<comment type="catalytic activity">
    <reaction evidence="1">
        <text>L-serine(in) + H(+)(in) = L-serine(out) + H(+)(out)</text>
        <dbReference type="Rhea" id="RHEA:28887"/>
        <dbReference type="ChEBI" id="CHEBI:15378"/>
        <dbReference type="ChEBI" id="CHEBI:33384"/>
    </reaction>
    <physiologicalReaction direction="right-to-left" evidence="1">
        <dbReference type="Rhea" id="RHEA:28889"/>
    </physiologicalReaction>
</comment>
<comment type="subcellular location">
    <subcellularLocation>
        <location evidence="1">Cell inner membrane</location>
        <topology evidence="2">Multi-pass membrane protein</topology>
    </subcellularLocation>
</comment>
<comment type="similarity">
    <text evidence="3">Belongs to the amino acid/polyamine transporter 2 family. SdaC/TdcC subfamily.</text>
</comment>
<dbReference type="EMBL" id="AE005174">
    <property type="protein sequence ID" value="AAG57910.1"/>
    <property type="molecule type" value="Genomic_DNA"/>
</dbReference>
<dbReference type="EMBL" id="BA000007">
    <property type="protein sequence ID" value="BAB37079.1"/>
    <property type="molecule type" value="Genomic_DNA"/>
</dbReference>
<dbReference type="PIR" id="B85931">
    <property type="entry name" value="B85931"/>
</dbReference>
<dbReference type="PIR" id="H91085">
    <property type="entry name" value="H91085"/>
</dbReference>
<dbReference type="RefSeq" id="NP_311683.1">
    <property type="nucleotide sequence ID" value="NC_002695.1"/>
</dbReference>
<dbReference type="RefSeq" id="WP_000450476.1">
    <property type="nucleotide sequence ID" value="NZ_VOAI01000003.1"/>
</dbReference>
<dbReference type="STRING" id="155864.Z4113"/>
<dbReference type="GeneID" id="916539"/>
<dbReference type="GeneID" id="93779202"/>
<dbReference type="KEGG" id="ece:Z4113"/>
<dbReference type="KEGG" id="ecs:ECs_3656"/>
<dbReference type="PATRIC" id="fig|386585.9.peg.3822"/>
<dbReference type="eggNOG" id="COG0814">
    <property type="taxonomic scope" value="Bacteria"/>
</dbReference>
<dbReference type="HOGENOM" id="CLU_052043_1_1_6"/>
<dbReference type="OMA" id="VMCLNAD"/>
<dbReference type="Proteomes" id="UP000000558">
    <property type="component" value="Chromosome"/>
</dbReference>
<dbReference type="Proteomes" id="UP000002519">
    <property type="component" value="Chromosome"/>
</dbReference>
<dbReference type="GO" id="GO:0005886">
    <property type="term" value="C:plasma membrane"/>
    <property type="evidence" value="ECO:0007669"/>
    <property type="project" value="UniProtKB-SubCell"/>
</dbReference>
<dbReference type="GO" id="GO:0015171">
    <property type="term" value="F:amino acid transmembrane transporter activity"/>
    <property type="evidence" value="ECO:0007669"/>
    <property type="project" value="InterPro"/>
</dbReference>
<dbReference type="GO" id="GO:0015293">
    <property type="term" value="F:symporter activity"/>
    <property type="evidence" value="ECO:0007669"/>
    <property type="project" value="UniProtKB-KW"/>
</dbReference>
<dbReference type="InterPro" id="IPR018227">
    <property type="entry name" value="Amino_acid_transport_2"/>
</dbReference>
<dbReference type="InterPro" id="IPR004694">
    <property type="entry name" value="Hydroxy_aa_transpt"/>
</dbReference>
<dbReference type="NCBIfam" id="TIGR00814">
    <property type="entry name" value="stp"/>
    <property type="match status" value="1"/>
</dbReference>
<dbReference type="PANTHER" id="PTHR35334">
    <property type="entry name" value="SERINE TRANSPORTER"/>
    <property type="match status" value="1"/>
</dbReference>
<dbReference type="PANTHER" id="PTHR35334:SF2">
    <property type="entry name" value="SERINE TRANSPORTER SDAC"/>
    <property type="match status" value="1"/>
</dbReference>
<keyword id="KW-0029">Amino-acid transport</keyword>
<keyword id="KW-0997">Cell inner membrane</keyword>
<keyword id="KW-1003">Cell membrane</keyword>
<keyword id="KW-0472">Membrane</keyword>
<keyword id="KW-1185">Reference proteome</keyword>
<keyword id="KW-0769">Symport</keyword>
<keyword id="KW-0812">Transmembrane</keyword>
<keyword id="KW-1133">Transmembrane helix</keyword>
<keyword id="KW-0813">Transport</keyword>